<evidence type="ECO:0000255" key="1"/>
<evidence type="ECO:0000255" key="2">
    <source>
        <dbReference type="PROSITE-ProRule" id="PRU00279"/>
    </source>
</evidence>
<evidence type="ECO:0000269" key="3">
    <source ref="7"/>
</evidence>
<evidence type="ECO:0000303" key="4">
    <source ref="7"/>
</evidence>
<evidence type="ECO:0000305" key="5"/>
<evidence type="ECO:0000312" key="6">
    <source>
        <dbReference type="Araport" id="AT4G14965"/>
    </source>
</evidence>
<evidence type="ECO:0000312" key="7">
    <source>
        <dbReference type="EMBL" id="CAB46053.1"/>
    </source>
</evidence>
<proteinExistence type="evidence at transcript level"/>
<gene>
    <name evidence="4" type="primary">MAPR4</name>
    <name evidence="6" type="ordered locus">At4g14965</name>
    <name evidence="7" type="ORF">dl3515w</name>
</gene>
<organism>
    <name type="scientific">Arabidopsis thaliana</name>
    <name type="common">Mouse-ear cress</name>
    <dbReference type="NCBI Taxonomy" id="3702"/>
    <lineage>
        <taxon>Eukaryota</taxon>
        <taxon>Viridiplantae</taxon>
        <taxon>Streptophyta</taxon>
        <taxon>Embryophyta</taxon>
        <taxon>Tracheophyta</taxon>
        <taxon>Spermatophyta</taxon>
        <taxon>Magnoliopsida</taxon>
        <taxon>eudicotyledons</taxon>
        <taxon>Gunneridae</taxon>
        <taxon>Pentapetalae</taxon>
        <taxon>rosids</taxon>
        <taxon>malvids</taxon>
        <taxon>Brassicales</taxon>
        <taxon>Brassicaceae</taxon>
        <taxon>Camelineae</taxon>
        <taxon>Arabidopsis</taxon>
    </lineage>
</organism>
<keyword id="KW-0446">Lipid-binding</keyword>
<keyword id="KW-0472">Membrane</keyword>
<keyword id="KW-1185">Reference proteome</keyword>
<keyword id="KW-0754">Steroid-binding</keyword>
<keyword id="KW-0812">Transmembrane</keyword>
<keyword id="KW-1133">Transmembrane helix</keyword>
<comment type="subcellular location">
    <subcellularLocation>
        <location evidence="1">Membrane</location>
        <topology evidence="1">Single-pass membrane protein</topology>
    </subcellularLocation>
</comment>
<comment type="induction">
    <text evidence="3">By auxin.</text>
</comment>
<comment type="domain">
    <text evidence="5">The cytochrome b5 heme-binding domain lacks one of the conserved iron-binding His residues at position 100.</text>
</comment>
<comment type="similarity">
    <text evidence="5">Belongs to the cytochrome b5 family. MAPR subfamily.</text>
</comment>
<comment type="sequence caution" evidence="5">
    <conflict type="erroneous gene model prediction">
        <sequence resource="EMBL-CDS" id="CAB46053"/>
    </conflict>
    <text>The predicted gene At4g14950 has been split into 2 genes: At4g14950 and At4g14965.</text>
</comment>
<comment type="sequence caution" evidence="5">
    <conflict type="erroneous gene model prediction">
        <sequence resource="EMBL-CDS" id="CAB78537"/>
    </conflict>
    <text>The predicted gene At4g14950 has been split into 2 genes: At4g14950 and At4g14965.</text>
</comment>
<dbReference type="EMBL" id="Z97337">
    <property type="protein sequence ID" value="CAB46053.1"/>
    <property type="status" value="ALT_SEQ"/>
    <property type="molecule type" value="Genomic_DNA"/>
</dbReference>
<dbReference type="EMBL" id="AL161540">
    <property type="protein sequence ID" value="CAB78537.1"/>
    <property type="status" value="ALT_SEQ"/>
    <property type="molecule type" value="Genomic_DNA"/>
</dbReference>
<dbReference type="EMBL" id="CP002687">
    <property type="protein sequence ID" value="AEE83531.1"/>
    <property type="molecule type" value="Genomic_DNA"/>
</dbReference>
<dbReference type="EMBL" id="BT024469">
    <property type="protein sequence ID" value="ABD19650.1"/>
    <property type="molecule type" value="mRNA"/>
</dbReference>
<dbReference type="EMBL" id="AK229457">
    <property type="protein sequence ID" value="BAF01315.1"/>
    <property type="molecule type" value="mRNA"/>
</dbReference>
<dbReference type="EMBL" id="AY084353">
    <property type="protein sequence ID" value="AAM60935.1"/>
    <property type="molecule type" value="mRNA"/>
</dbReference>
<dbReference type="PIR" id="C85164">
    <property type="entry name" value="C85164"/>
</dbReference>
<dbReference type="PIR" id="H71412">
    <property type="entry name" value="H71412"/>
</dbReference>
<dbReference type="RefSeq" id="NP_567451.1">
    <property type="nucleotide sequence ID" value="NM_117583.8"/>
</dbReference>
<dbReference type="SMR" id="Q2HIW2"/>
<dbReference type="FunCoup" id="Q2HIW2">
    <property type="interactions" value="3256"/>
</dbReference>
<dbReference type="STRING" id="3702.Q2HIW2"/>
<dbReference type="PaxDb" id="3702-AT4G14965.1"/>
<dbReference type="ProteomicsDB" id="238842"/>
<dbReference type="EnsemblPlants" id="AT4G14965.1">
    <property type="protein sequence ID" value="AT4G14965.1"/>
    <property type="gene ID" value="AT4G14965"/>
</dbReference>
<dbReference type="GeneID" id="827155"/>
<dbReference type="Gramene" id="AT4G14965.1">
    <property type="protein sequence ID" value="AT4G14965.1"/>
    <property type="gene ID" value="AT4G14965"/>
</dbReference>
<dbReference type="KEGG" id="ath:AT4G14965"/>
<dbReference type="Araport" id="AT4G14965"/>
<dbReference type="TAIR" id="AT4G14965">
    <property type="gene designation" value="MAPR4"/>
</dbReference>
<dbReference type="eggNOG" id="KOG1108">
    <property type="taxonomic scope" value="Eukaryota"/>
</dbReference>
<dbReference type="HOGENOM" id="CLU_065455_1_0_1"/>
<dbReference type="InParanoid" id="Q2HIW2"/>
<dbReference type="OMA" id="GHKHYGP"/>
<dbReference type="PhylomeDB" id="Q2HIW2"/>
<dbReference type="PRO" id="PR:Q2HIW2"/>
<dbReference type="Proteomes" id="UP000006548">
    <property type="component" value="Chromosome 4"/>
</dbReference>
<dbReference type="ExpressionAtlas" id="Q2HIW2">
    <property type="expression patterns" value="baseline and differential"/>
</dbReference>
<dbReference type="GO" id="GO:0016020">
    <property type="term" value="C:membrane"/>
    <property type="evidence" value="ECO:0007669"/>
    <property type="project" value="UniProtKB-SubCell"/>
</dbReference>
<dbReference type="GO" id="GO:0005496">
    <property type="term" value="F:steroid binding"/>
    <property type="evidence" value="ECO:0007669"/>
    <property type="project" value="UniProtKB-KW"/>
</dbReference>
<dbReference type="Gene3D" id="3.10.120.10">
    <property type="entry name" value="Cytochrome b5-like heme/steroid binding domain"/>
    <property type="match status" value="1"/>
</dbReference>
<dbReference type="InterPro" id="IPR001199">
    <property type="entry name" value="Cyt_B5-like_heme/steroid-bd"/>
</dbReference>
<dbReference type="InterPro" id="IPR036400">
    <property type="entry name" value="Cyt_B5-like_heme/steroid_sf"/>
</dbReference>
<dbReference type="InterPro" id="IPR050577">
    <property type="entry name" value="MAPR/NEUFC/NENF-like"/>
</dbReference>
<dbReference type="PANTHER" id="PTHR10281">
    <property type="entry name" value="MEMBRANE-ASSOCIATED PROGESTERONE RECEPTOR COMPONENT-RELATED"/>
    <property type="match status" value="1"/>
</dbReference>
<dbReference type="PANTHER" id="PTHR10281:SF4">
    <property type="entry name" value="NEUFERRICIN"/>
    <property type="match status" value="1"/>
</dbReference>
<dbReference type="Pfam" id="PF00173">
    <property type="entry name" value="Cyt-b5"/>
    <property type="match status" value="1"/>
</dbReference>
<dbReference type="SMART" id="SM01117">
    <property type="entry name" value="Cyt-b5"/>
    <property type="match status" value="1"/>
</dbReference>
<dbReference type="SUPFAM" id="SSF55856">
    <property type="entry name" value="Cytochrome b5-like heme/steroid binding domain"/>
    <property type="match status" value="1"/>
</dbReference>
<sequence length="245" mass="27167">MIPARRFLLSPFVGVTFIVVLVSLYFRSSFKSPQHQYQKRLFSAEELALYNGTDETLPILLGILGSVFDVTKGKFHYGSGGGYNHFAGRDASRAFVSGNFTGDGLTDSLQGLSSSEVKSIVDWRGFYSRTYTPVGKLVGRYYDSQGNPTKHLKGAEAKASRGAQLMEKQKTEEAKQSNCNSRWSQDEGGEVWCDVGVPRLVQRPLEIAITGSMSKRCACFEEDQLDQSGLEIYKDCEPLAKTCRV</sequence>
<protein>
    <recommendedName>
        <fullName evidence="4">Membrane-associated progesterone-binding protein 4</fullName>
        <shortName evidence="4">AtMAPR4</shortName>
    </recommendedName>
</protein>
<accession>Q2HIW2</accession>
<accession>O23350</accession>
<accession>Q8LGC2</accession>
<feature type="chain" id="PRO_0000430954" description="Membrane-associated progesterone-binding protein 4">
    <location>
        <begin position="1"/>
        <end position="245"/>
    </location>
</feature>
<feature type="transmembrane region" description="Helical" evidence="1">
    <location>
        <begin position="6"/>
        <end position="26"/>
    </location>
</feature>
<feature type="domain" description="Cytochrome b5 heme-binding" evidence="2">
    <location>
        <begin position="39"/>
        <end position="138"/>
    </location>
</feature>
<feature type="region of interest" description="Steroid-binding" evidence="4">
    <location>
        <begin position="45"/>
        <end position="138"/>
    </location>
</feature>
<feature type="sequence conflict" description="In Ref. 6; AAM60935." ref="6">
    <original>Y</original>
    <variation>D</variation>
    <location>
        <position position="37"/>
    </location>
</feature>
<feature type="sequence conflict" description="In Ref. 6; AAM60935." ref="6">
    <original>F</original>
    <variation>S</variation>
    <location>
        <position position="75"/>
    </location>
</feature>
<feature type="sequence conflict" description="In Ref. 6; AAM60935." ref="6">
    <original>T</original>
    <variation>I</variation>
    <location>
        <position position="132"/>
    </location>
</feature>
<feature type="sequence conflict" description="In Ref. 6; AAM60935." ref="6">
    <original>S</original>
    <variation>T</variation>
    <location>
        <position position="177"/>
    </location>
</feature>
<reference key="1">
    <citation type="journal article" date="1998" name="Nature">
        <title>Analysis of 1.9 Mb of contiguous sequence from chromosome 4 of Arabidopsis thaliana.</title>
        <authorList>
            <person name="Bevan M."/>
            <person name="Bancroft I."/>
            <person name="Bent E."/>
            <person name="Love K."/>
            <person name="Goodman H.M."/>
            <person name="Dean C."/>
            <person name="Bergkamp R."/>
            <person name="Dirkse W."/>
            <person name="van Staveren M."/>
            <person name="Stiekema W."/>
            <person name="Drost L."/>
            <person name="Ridley P."/>
            <person name="Hudson S.-A."/>
            <person name="Patel K."/>
            <person name="Murphy G."/>
            <person name="Piffanelli P."/>
            <person name="Wedler H."/>
            <person name="Wedler E."/>
            <person name="Wambutt R."/>
            <person name="Weitzenegger T."/>
            <person name="Pohl T."/>
            <person name="Terryn N."/>
            <person name="Gielen J."/>
            <person name="Villarroel R."/>
            <person name="De Clercq R."/>
            <person name="van Montagu M."/>
            <person name="Lecharny A."/>
            <person name="Aubourg S."/>
            <person name="Gy I."/>
            <person name="Kreis M."/>
            <person name="Lao N."/>
            <person name="Kavanagh T."/>
            <person name="Hempel S."/>
            <person name="Kotter P."/>
            <person name="Entian K.-D."/>
            <person name="Rieger M."/>
            <person name="Schaefer M."/>
            <person name="Funk B."/>
            <person name="Mueller-Auer S."/>
            <person name="Silvey M."/>
            <person name="James R."/>
            <person name="Monfort A."/>
            <person name="Pons A."/>
            <person name="Puigdomenech P."/>
            <person name="Douka A."/>
            <person name="Voukelatou E."/>
            <person name="Milioni D."/>
            <person name="Hatzopoulos P."/>
            <person name="Piravandi E."/>
            <person name="Obermaier B."/>
            <person name="Hilbert H."/>
            <person name="Duesterhoeft A."/>
            <person name="Moores T."/>
            <person name="Jones J.D.G."/>
            <person name="Eneva T."/>
            <person name="Palme K."/>
            <person name="Benes V."/>
            <person name="Rechmann S."/>
            <person name="Ansorge W."/>
            <person name="Cooke R."/>
            <person name="Berger C."/>
            <person name="Delseny M."/>
            <person name="Voet M."/>
            <person name="Volckaert G."/>
            <person name="Mewes H.-W."/>
            <person name="Klosterman S."/>
            <person name="Schueller C."/>
            <person name="Chalwatzis N."/>
        </authorList>
    </citation>
    <scope>NUCLEOTIDE SEQUENCE [LARGE SCALE GENOMIC DNA]</scope>
    <source>
        <strain>cv. Columbia</strain>
    </source>
</reference>
<reference key="2">
    <citation type="journal article" date="1999" name="Nature">
        <title>Sequence and analysis of chromosome 4 of the plant Arabidopsis thaliana.</title>
        <authorList>
            <person name="Mayer K.F.X."/>
            <person name="Schueller C."/>
            <person name="Wambutt R."/>
            <person name="Murphy G."/>
            <person name="Volckaert G."/>
            <person name="Pohl T."/>
            <person name="Duesterhoeft A."/>
            <person name="Stiekema W."/>
            <person name="Entian K.-D."/>
            <person name="Terryn N."/>
            <person name="Harris B."/>
            <person name="Ansorge W."/>
            <person name="Brandt P."/>
            <person name="Grivell L.A."/>
            <person name="Rieger M."/>
            <person name="Weichselgartner M."/>
            <person name="de Simone V."/>
            <person name="Obermaier B."/>
            <person name="Mache R."/>
            <person name="Mueller M."/>
            <person name="Kreis M."/>
            <person name="Delseny M."/>
            <person name="Puigdomenech P."/>
            <person name="Watson M."/>
            <person name="Schmidtheini T."/>
            <person name="Reichert B."/>
            <person name="Portetelle D."/>
            <person name="Perez-Alonso M."/>
            <person name="Boutry M."/>
            <person name="Bancroft I."/>
            <person name="Vos P."/>
            <person name="Hoheisel J."/>
            <person name="Zimmermann W."/>
            <person name="Wedler H."/>
            <person name="Ridley P."/>
            <person name="Langham S.-A."/>
            <person name="McCullagh B."/>
            <person name="Bilham L."/>
            <person name="Robben J."/>
            <person name="van der Schueren J."/>
            <person name="Grymonprez B."/>
            <person name="Chuang Y.-J."/>
            <person name="Vandenbussche F."/>
            <person name="Braeken M."/>
            <person name="Weltjens I."/>
            <person name="Voet M."/>
            <person name="Bastiaens I."/>
            <person name="Aert R."/>
            <person name="Defoor E."/>
            <person name="Weitzenegger T."/>
            <person name="Bothe G."/>
            <person name="Ramsperger U."/>
            <person name="Hilbert H."/>
            <person name="Braun M."/>
            <person name="Holzer E."/>
            <person name="Brandt A."/>
            <person name="Peters S."/>
            <person name="van Staveren M."/>
            <person name="Dirkse W."/>
            <person name="Mooijman P."/>
            <person name="Klein Lankhorst R."/>
            <person name="Rose M."/>
            <person name="Hauf J."/>
            <person name="Koetter P."/>
            <person name="Berneiser S."/>
            <person name="Hempel S."/>
            <person name="Feldpausch M."/>
            <person name="Lamberth S."/>
            <person name="Van den Daele H."/>
            <person name="De Keyser A."/>
            <person name="Buysshaert C."/>
            <person name="Gielen J."/>
            <person name="Villarroel R."/>
            <person name="De Clercq R."/>
            <person name="van Montagu M."/>
            <person name="Rogers J."/>
            <person name="Cronin A."/>
            <person name="Quail M.A."/>
            <person name="Bray-Allen S."/>
            <person name="Clark L."/>
            <person name="Doggett J."/>
            <person name="Hall S."/>
            <person name="Kay M."/>
            <person name="Lennard N."/>
            <person name="McLay K."/>
            <person name="Mayes R."/>
            <person name="Pettett A."/>
            <person name="Rajandream M.A."/>
            <person name="Lyne M."/>
            <person name="Benes V."/>
            <person name="Rechmann S."/>
            <person name="Borkova D."/>
            <person name="Bloecker H."/>
            <person name="Scharfe M."/>
            <person name="Grimm M."/>
            <person name="Loehnert T.-H."/>
            <person name="Dose S."/>
            <person name="de Haan M."/>
            <person name="Maarse A.C."/>
            <person name="Schaefer M."/>
            <person name="Mueller-Auer S."/>
            <person name="Gabel C."/>
            <person name="Fuchs M."/>
            <person name="Fartmann B."/>
            <person name="Granderath K."/>
            <person name="Dauner D."/>
            <person name="Herzl A."/>
            <person name="Neumann S."/>
            <person name="Argiriou A."/>
            <person name="Vitale D."/>
            <person name="Liguori R."/>
            <person name="Piravandi E."/>
            <person name="Massenet O."/>
            <person name="Quigley F."/>
            <person name="Clabauld G."/>
            <person name="Muendlein A."/>
            <person name="Felber R."/>
            <person name="Schnabl S."/>
            <person name="Hiller R."/>
            <person name="Schmidt W."/>
            <person name="Lecharny A."/>
            <person name="Aubourg S."/>
            <person name="Chefdor F."/>
            <person name="Cooke R."/>
            <person name="Berger C."/>
            <person name="Monfort A."/>
            <person name="Casacuberta E."/>
            <person name="Gibbons T."/>
            <person name="Weber N."/>
            <person name="Vandenbol M."/>
            <person name="Bargues M."/>
            <person name="Terol J."/>
            <person name="Torres A."/>
            <person name="Perez-Perez A."/>
            <person name="Purnelle B."/>
            <person name="Bent E."/>
            <person name="Johnson S."/>
            <person name="Tacon D."/>
            <person name="Jesse T."/>
            <person name="Heijnen L."/>
            <person name="Schwarz S."/>
            <person name="Scholler P."/>
            <person name="Heber S."/>
            <person name="Francs P."/>
            <person name="Bielke C."/>
            <person name="Frishman D."/>
            <person name="Haase D."/>
            <person name="Lemcke K."/>
            <person name="Mewes H.-W."/>
            <person name="Stocker S."/>
            <person name="Zaccaria P."/>
            <person name="Bevan M."/>
            <person name="Wilson R.K."/>
            <person name="de la Bastide M."/>
            <person name="Habermann K."/>
            <person name="Parnell L."/>
            <person name="Dedhia N."/>
            <person name="Gnoj L."/>
            <person name="Schutz K."/>
            <person name="Huang E."/>
            <person name="Spiegel L."/>
            <person name="Sekhon M."/>
            <person name="Murray J."/>
            <person name="Sheet P."/>
            <person name="Cordes M."/>
            <person name="Abu-Threideh J."/>
            <person name="Stoneking T."/>
            <person name="Kalicki J."/>
            <person name="Graves T."/>
            <person name="Harmon G."/>
            <person name="Edwards J."/>
            <person name="Latreille P."/>
            <person name="Courtney L."/>
            <person name="Cloud J."/>
            <person name="Abbott A."/>
            <person name="Scott K."/>
            <person name="Johnson D."/>
            <person name="Minx P."/>
            <person name="Bentley D."/>
            <person name="Fulton B."/>
            <person name="Miller N."/>
            <person name="Greco T."/>
            <person name="Kemp K."/>
            <person name="Kramer J."/>
            <person name="Fulton L."/>
            <person name="Mardis E."/>
            <person name="Dante M."/>
            <person name="Pepin K."/>
            <person name="Hillier L.W."/>
            <person name="Nelson J."/>
            <person name="Spieth J."/>
            <person name="Ryan E."/>
            <person name="Andrews S."/>
            <person name="Geisel C."/>
            <person name="Layman D."/>
            <person name="Du H."/>
            <person name="Ali J."/>
            <person name="Berghoff A."/>
            <person name="Jones K."/>
            <person name="Drone K."/>
            <person name="Cotton M."/>
            <person name="Joshu C."/>
            <person name="Antonoiu B."/>
            <person name="Zidanic M."/>
            <person name="Strong C."/>
            <person name="Sun H."/>
            <person name="Lamar B."/>
            <person name="Yordan C."/>
            <person name="Ma P."/>
            <person name="Zhong J."/>
            <person name="Preston R."/>
            <person name="Vil D."/>
            <person name="Shekher M."/>
            <person name="Matero A."/>
            <person name="Shah R."/>
            <person name="Swaby I.K."/>
            <person name="O'Shaughnessy A."/>
            <person name="Rodriguez M."/>
            <person name="Hoffman J."/>
            <person name="Till S."/>
            <person name="Granat S."/>
            <person name="Shohdy N."/>
            <person name="Hasegawa A."/>
            <person name="Hameed A."/>
            <person name="Lodhi M."/>
            <person name="Johnson A."/>
            <person name="Chen E."/>
            <person name="Marra M.A."/>
            <person name="Martienssen R."/>
            <person name="McCombie W.R."/>
        </authorList>
    </citation>
    <scope>NUCLEOTIDE SEQUENCE [LARGE SCALE GENOMIC DNA]</scope>
    <source>
        <strain>cv. Columbia</strain>
    </source>
</reference>
<reference key="3">
    <citation type="journal article" date="2017" name="Plant J.">
        <title>Araport11: a complete reannotation of the Arabidopsis thaliana reference genome.</title>
        <authorList>
            <person name="Cheng C.Y."/>
            <person name="Krishnakumar V."/>
            <person name="Chan A.P."/>
            <person name="Thibaud-Nissen F."/>
            <person name="Schobel S."/>
            <person name="Town C.D."/>
        </authorList>
    </citation>
    <scope>GENOME REANNOTATION</scope>
    <source>
        <strain>cv. Columbia</strain>
    </source>
</reference>
<reference key="4">
    <citation type="submission" date="2006-02" db="EMBL/GenBank/DDBJ databases">
        <title>Arabidopsis ORF clones.</title>
        <authorList>
            <person name="Shinn P."/>
            <person name="Chen H."/>
            <person name="Kim C.J."/>
            <person name="Ecker J.R."/>
        </authorList>
    </citation>
    <scope>NUCLEOTIDE SEQUENCE [LARGE SCALE MRNA]</scope>
    <source>
        <strain>cv. Columbia</strain>
    </source>
</reference>
<reference key="5">
    <citation type="submission" date="2006-07" db="EMBL/GenBank/DDBJ databases">
        <title>Large-scale analysis of RIKEN Arabidopsis full-length (RAFL) cDNAs.</title>
        <authorList>
            <person name="Totoki Y."/>
            <person name="Seki M."/>
            <person name="Ishida J."/>
            <person name="Nakajima M."/>
            <person name="Enju A."/>
            <person name="Kamiya A."/>
            <person name="Narusaka M."/>
            <person name="Shin-i T."/>
            <person name="Nakagawa M."/>
            <person name="Sakamoto N."/>
            <person name="Oishi K."/>
            <person name="Kohara Y."/>
            <person name="Kobayashi M."/>
            <person name="Toyoda A."/>
            <person name="Sakaki Y."/>
            <person name="Sakurai T."/>
            <person name="Iida K."/>
            <person name="Akiyama K."/>
            <person name="Satou M."/>
            <person name="Toyoda T."/>
            <person name="Konagaya A."/>
            <person name="Carninci P."/>
            <person name="Kawai J."/>
            <person name="Hayashizaki Y."/>
            <person name="Shinozaki K."/>
        </authorList>
    </citation>
    <scope>NUCLEOTIDE SEQUENCE [LARGE SCALE MRNA]</scope>
    <source>
        <strain>cv. Columbia</strain>
    </source>
</reference>
<reference key="6">
    <citation type="submission" date="2002-03" db="EMBL/GenBank/DDBJ databases">
        <title>Full-length cDNA from Arabidopsis thaliana.</title>
        <authorList>
            <person name="Brover V.V."/>
            <person name="Troukhan M.E."/>
            <person name="Alexandrov N.A."/>
            <person name="Lu Y.-P."/>
            <person name="Flavell R.B."/>
            <person name="Feldmann K.A."/>
        </authorList>
    </citation>
    <scope>NUCLEOTIDE SEQUENCE [LARGE SCALE MRNA]</scope>
</reference>
<reference key="7">
    <citation type="journal article" date="2005" name="Bot. Bull. Acad. Sin.">
        <title>Characterization of a novel Arabidopsis protein family AtMAPR homologous to 25-Dx/IZAg/Hpr6.6 proteins.</title>
        <authorList>
            <person name="Kao A.L."/>
            <person name="Chang T.Y."/>
            <person name="Chang S.H."/>
            <person name="Su J.C."/>
            <person name="Yang C.C."/>
        </authorList>
    </citation>
    <scope>INDUCTION BY AUXIN</scope>
    <scope>NOMENCLATURE</scope>
</reference>
<name>MAPR4_ARATH</name>